<organism>
    <name type="scientific">Escherichia coli O139:H28 (strain E24377A / ETEC)</name>
    <dbReference type="NCBI Taxonomy" id="331111"/>
    <lineage>
        <taxon>Bacteria</taxon>
        <taxon>Pseudomonadati</taxon>
        <taxon>Pseudomonadota</taxon>
        <taxon>Gammaproteobacteria</taxon>
        <taxon>Enterobacterales</taxon>
        <taxon>Enterobacteriaceae</taxon>
        <taxon>Escherichia</taxon>
    </lineage>
</organism>
<accession>A7ZM92</accession>
<evidence type="ECO:0000255" key="1">
    <source>
        <dbReference type="HAMAP-Rule" id="MF_00478"/>
    </source>
</evidence>
<feature type="chain" id="PRO_1000060407" description="Ion-translocating oxidoreductase complex subunit E">
    <location>
        <begin position="1"/>
        <end position="231"/>
    </location>
</feature>
<feature type="transmembrane region" description="Helical" evidence="1">
    <location>
        <begin position="18"/>
        <end position="38"/>
    </location>
</feature>
<feature type="transmembrane region" description="Helical" evidence="1">
    <location>
        <begin position="39"/>
        <end position="59"/>
    </location>
</feature>
<feature type="transmembrane region" description="Helical" evidence="1">
    <location>
        <begin position="63"/>
        <end position="83"/>
    </location>
</feature>
<feature type="transmembrane region" description="Helical" evidence="1">
    <location>
        <begin position="86"/>
        <end position="106"/>
    </location>
</feature>
<feature type="transmembrane region" description="Helical" evidence="1">
    <location>
        <begin position="125"/>
        <end position="145"/>
    </location>
</feature>
<feature type="transmembrane region" description="Helical" evidence="1">
    <location>
        <begin position="182"/>
        <end position="202"/>
    </location>
</feature>
<name>RSXE_ECO24</name>
<reference key="1">
    <citation type="journal article" date="2008" name="J. Bacteriol.">
        <title>The pangenome structure of Escherichia coli: comparative genomic analysis of E. coli commensal and pathogenic isolates.</title>
        <authorList>
            <person name="Rasko D.A."/>
            <person name="Rosovitz M.J."/>
            <person name="Myers G.S.A."/>
            <person name="Mongodin E.F."/>
            <person name="Fricke W.F."/>
            <person name="Gajer P."/>
            <person name="Crabtree J."/>
            <person name="Sebaihia M."/>
            <person name="Thomson N.R."/>
            <person name="Chaudhuri R."/>
            <person name="Henderson I.R."/>
            <person name="Sperandio V."/>
            <person name="Ravel J."/>
        </authorList>
    </citation>
    <scope>NUCLEOTIDE SEQUENCE [LARGE SCALE GENOMIC DNA]</scope>
    <source>
        <strain>E24377A / ETEC</strain>
    </source>
</reference>
<proteinExistence type="inferred from homology"/>
<gene>
    <name evidence="1" type="primary">rsxE</name>
    <name type="synonym">rnfE</name>
    <name type="ordered locus">EcE24377A_1841</name>
</gene>
<comment type="function">
    <text evidence="1">Part of a membrane-bound complex that couples electron transfer with translocation of ions across the membrane. Required to maintain the reduced state of SoxR.</text>
</comment>
<comment type="subunit">
    <text evidence="1">The complex is composed of six subunits: RsxA, RsxB, RsxC, RsxD, RsxE and RsxG.</text>
</comment>
<comment type="subcellular location">
    <subcellularLocation>
        <location evidence="1">Cell inner membrane</location>
        <topology evidence="1">Multi-pass membrane protein</topology>
    </subcellularLocation>
</comment>
<comment type="similarity">
    <text evidence="1">Belongs to the NqrDE/RnfAE family.</text>
</comment>
<sequence length="231" mass="24489">MSEIKDVIVQGLWKNNSALVQLLGLCPLLAVTSTATNALGLGLATTLVLTLTNLTISTLRHWTPAEIRIPIYVMIIASVVSAVQMLINAYAFGLYQSLGIFIPLIVTNCIVVGRAEAFAAKKGPALSALDGFSIGMGATCAMFVLGSLREIIGNGTLFDGADALLGSWAKVLRVEIFHTDSPFLLAMLPPGAFIGLGLMLAGKYLIDERMKKRRTEAAAERALPNGETGNV</sequence>
<keyword id="KW-0997">Cell inner membrane</keyword>
<keyword id="KW-1003">Cell membrane</keyword>
<keyword id="KW-0249">Electron transport</keyword>
<keyword id="KW-0472">Membrane</keyword>
<keyword id="KW-1185">Reference proteome</keyword>
<keyword id="KW-1278">Translocase</keyword>
<keyword id="KW-0812">Transmembrane</keyword>
<keyword id="KW-1133">Transmembrane helix</keyword>
<keyword id="KW-0813">Transport</keyword>
<dbReference type="EC" id="7.-.-.-" evidence="1"/>
<dbReference type="EMBL" id="CP000800">
    <property type="protein sequence ID" value="ABV18183.1"/>
    <property type="molecule type" value="Genomic_DNA"/>
</dbReference>
<dbReference type="RefSeq" id="WP_001289657.1">
    <property type="nucleotide sequence ID" value="NC_009801.1"/>
</dbReference>
<dbReference type="SMR" id="A7ZM92"/>
<dbReference type="GeneID" id="93775784"/>
<dbReference type="KEGG" id="ecw:EcE24377A_1841"/>
<dbReference type="HOGENOM" id="CLU_046659_1_0_6"/>
<dbReference type="Proteomes" id="UP000001122">
    <property type="component" value="Chromosome"/>
</dbReference>
<dbReference type="GO" id="GO:0005886">
    <property type="term" value="C:plasma membrane"/>
    <property type="evidence" value="ECO:0007669"/>
    <property type="project" value="UniProtKB-SubCell"/>
</dbReference>
<dbReference type="GO" id="GO:0022900">
    <property type="term" value="P:electron transport chain"/>
    <property type="evidence" value="ECO:0007669"/>
    <property type="project" value="UniProtKB-UniRule"/>
</dbReference>
<dbReference type="HAMAP" id="MF_00478">
    <property type="entry name" value="RsxE_RnfE"/>
    <property type="match status" value="1"/>
</dbReference>
<dbReference type="InterPro" id="IPR003667">
    <property type="entry name" value="NqrDE/RnfAE"/>
</dbReference>
<dbReference type="InterPro" id="IPR010968">
    <property type="entry name" value="RnfE"/>
</dbReference>
<dbReference type="NCBIfam" id="NF009070">
    <property type="entry name" value="PRK12405.1"/>
    <property type="match status" value="1"/>
</dbReference>
<dbReference type="NCBIfam" id="TIGR01948">
    <property type="entry name" value="rnfE"/>
    <property type="match status" value="1"/>
</dbReference>
<dbReference type="PANTHER" id="PTHR30586">
    <property type="entry name" value="ELECTRON TRANSPORT COMPLEX PROTEIN RNFE"/>
    <property type="match status" value="1"/>
</dbReference>
<dbReference type="PANTHER" id="PTHR30586:SF0">
    <property type="entry name" value="ION-TRANSLOCATING OXIDOREDUCTASE COMPLEX SUBUNIT E"/>
    <property type="match status" value="1"/>
</dbReference>
<dbReference type="Pfam" id="PF02508">
    <property type="entry name" value="Rnf-Nqr"/>
    <property type="match status" value="1"/>
</dbReference>
<dbReference type="PIRSF" id="PIRSF006102">
    <property type="entry name" value="NQR_DE"/>
    <property type="match status" value="1"/>
</dbReference>
<protein>
    <recommendedName>
        <fullName evidence="1">Ion-translocating oxidoreductase complex subunit E</fullName>
        <ecNumber evidence="1">7.-.-.-</ecNumber>
    </recommendedName>
    <alternativeName>
        <fullName evidence="1">Rsx electron transport complex subunit E</fullName>
    </alternativeName>
</protein>